<keyword id="KW-0687">Ribonucleoprotein</keyword>
<keyword id="KW-0689">Ribosomal protein</keyword>
<keyword id="KW-0694">RNA-binding</keyword>
<keyword id="KW-0699">rRNA-binding</keyword>
<protein>
    <recommendedName>
        <fullName evidence="1">Small ribosomal subunit protein uS15</fullName>
    </recommendedName>
    <alternativeName>
        <fullName evidence="2">30S ribosomal protein S15</fullName>
    </alternativeName>
</protein>
<proteinExistence type="inferred from homology"/>
<name>RS15_YERPG</name>
<comment type="function">
    <text evidence="1">One of the primary rRNA binding proteins, it binds directly to 16S rRNA where it helps nucleate assembly of the platform of the 30S subunit by binding and bridging several RNA helices of the 16S rRNA.</text>
</comment>
<comment type="function">
    <text evidence="1">Forms an intersubunit bridge (bridge B4) with the 23S rRNA of the 50S subunit in the ribosome.</text>
</comment>
<comment type="subunit">
    <text evidence="1">Part of the 30S ribosomal subunit. Forms a bridge to the 50S subunit in the 70S ribosome, contacting the 23S rRNA.</text>
</comment>
<comment type="similarity">
    <text evidence="1">Belongs to the universal ribosomal protein uS15 family.</text>
</comment>
<feature type="chain" id="PRO_1000143198" description="Small ribosomal subunit protein uS15">
    <location>
        <begin position="1"/>
        <end position="89"/>
    </location>
</feature>
<evidence type="ECO:0000255" key="1">
    <source>
        <dbReference type="HAMAP-Rule" id="MF_01343"/>
    </source>
</evidence>
<evidence type="ECO:0000305" key="2"/>
<reference key="1">
    <citation type="journal article" date="2010" name="J. Bacteriol.">
        <title>Genome sequence of the deep-rooted Yersinia pestis strain Angola reveals new insights into the evolution and pangenome of the plague bacterium.</title>
        <authorList>
            <person name="Eppinger M."/>
            <person name="Worsham P.L."/>
            <person name="Nikolich M.P."/>
            <person name="Riley D.R."/>
            <person name="Sebastian Y."/>
            <person name="Mou S."/>
            <person name="Achtman M."/>
            <person name="Lindler L.E."/>
            <person name="Ravel J."/>
        </authorList>
    </citation>
    <scope>NUCLEOTIDE SEQUENCE [LARGE SCALE GENOMIC DNA]</scope>
    <source>
        <strain>Angola</strain>
    </source>
</reference>
<gene>
    <name evidence="1" type="primary">rpsO</name>
    <name type="ordered locus">YpAngola_A3996</name>
</gene>
<sequence length="89" mass="10140">MSLSVEAKAKIVADFGRGTNDTGSSEVQVALLTAQINHLQGHFSEHKKDHHSRRGLLRMVSTRRKLLDYLKRQDVARYASLIERLGLRR</sequence>
<accession>A9R5A6</accession>
<dbReference type="EMBL" id="CP000901">
    <property type="protein sequence ID" value="ABX86920.1"/>
    <property type="molecule type" value="Genomic_DNA"/>
</dbReference>
<dbReference type="RefSeq" id="WP_002209257.1">
    <property type="nucleotide sequence ID" value="NZ_CP009935.1"/>
</dbReference>
<dbReference type="SMR" id="A9R5A6"/>
<dbReference type="GeneID" id="96663990"/>
<dbReference type="KEGG" id="ypg:YpAngola_A3996"/>
<dbReference type="PATRIC" id="fig|349746.12.peg.720"/>
<dbReference type="GO" id="GO:0022627">
    <property type="term" value="C:cytosolic small ribosomal subunit"/>
    <property type="evidence" value="ECO:0007669"/>
    <property type="project" value="TreeGrafter"/>
</dbReference>
<dbReference type="GO" id="GO:0019843">
    <property type="term" value="F:rRNA binding"/>
    <property type="evidence" value="ECO:0007669"/>
    <property type="project" value="UniProtKB-UniRule"/>
</dbReference>
<dbReference type="GO" id="GO:0003735">
    <property type="term" value="F:structural constituent of ribosome"/>
    <property type="evidence" value="ECO:0007669"/>
    <property type="project" value="InterPro"/>
</dbReference>
<dbReference type="GO" id="GO:0006412">
    <property type="term" value="P:translation"/>
    <property type="evidence" value="ECO:0007669"/>
    <property type="project" value="UniProtKB-UniRule"/>
</dbReference>
<dbReference type="CDD" id="cd00353">
    <property type="entry name" value="Ribosomal_S15p_S13e"/>
    <property type="match status" value="1"/>
</dbReference>
<dbReference type="FunFam" id="1.10.287.10:FF:000002">
    <property type="entry name" value="30S ribosomal protein S15"/>
    <property type="match status" value="1"/>
</dbReference>
<dbReference type="Gene3D" id="6.10.250.3130">
    <property type="match status" value="1"/>
</dbReference>
<dbReference type="Gene3D" id="1.10.287.10">
    <property type="entry name" value="S15/NS1, RNA-binding"/>
    <property type="match status" value="1"/>
</dbReference>
<dbReference type="HAMAP" id="MF_01343_B">
    <property type="entry name" value="Ribosomal_uS15_B"/>
    <property type="match status" value="1"/>
</dbReference>
<dbReference type="InterPro" id="IPR000589">
    <property type="entry name" value="Ribosomal_uS15"/>
</dbReference>
<dbReference type="InterPro" id="IPR005290">
    <property type="entry name" value="Ribosomal_uS15_bac-type"/>
</dbReference>
<dbReference type="InterPro" id="IPR009068">
    <property type="entry name" value="uS15_NS1_RNA-bd_sf"/>
</dbReference>
<dbReference type="NCBIfam" id="TIGR00952">
    <property type="entry name" value="S15_bact"/>
    <property type="match status" value="1"/>
</dbReference>
<dbReference type="PANTHER" id="PTHR23321">
    <property type="entry name" value="RIBOSOMAL PROTEIN S15, BACTERIAL AND ORGANELLAR"/>
    <property type="match status" value="1"/>
</dbReference>
<dbReference type="PANTHER" id="PTHR23321:SF26">
    <property type="entry name" value="SMALL RIBOSOMAL SUBUNIT PROTEIN US15M"/>
    <property type="match status" value="1"/>
</dbReference>
<dbReference type="Pfam" id="PF00312">
    <property type="entry name" value="Ribosomal_S15"/>
    <property type="match status" value="1"/>
</dbReference>
<dbReference type="SMART" id="SM01387">
    <property type="entry name" value="Ribosomal_S15"/>
    <property type="match status" value="1"/>
</dbReference>
<dbReference type="SUPFAM" id="SSF47060">
    <property type="entry name" value="S15/NS1 RNA-binding domain"/>
    <property type="match status" value="1"/>
</dbReference>
<dbReference type="PROSITE" id="PS00362">
    <property type="entry name" value="RIBOSOMAL_S15"/>
    <property type="match status" value="1"/>
</dbReference>
<organism>
    <name type="scientific">Yersinia pestis bv. Antiqua (strain Angola)</name>
    <dbReference type="NCBI Taxonomy" id="349746"/>
    <lineage>
        <taxon>Bacteria</taxon>
        <taxon>Pseudomonadati</taxon>
        <taxon>Pseudomonadota</taxon>
        <taxon>Gammaproteobacteria</taxon>
        <taxon>Enterobacterales</taxon>
        <taxon>Yersiniaceae</taxon>
        <taxon>Yersinia</taxon>
    </lineage>
</organism>